<evidence type="ECO:0000255" key="1"/>
<evidence type="ECO:0000269" key="2">
    <source>
    </source>
</evidence>
<evidence type="ECO:0000305" key="3"/>
<gene>
    <name type="primary">CURT1D</name>
    <name type="ordered locus">At4g38100</name>
    <name type="ORF">F20D10.220</name>
</gene>
<sequence>MELCTRSTTIITHLPASFNGHGYLAGKSVDRISLPLQRNVASLVLQSRTLRCSRKFPGETVTEETSTGVNEFGVEDRDGVVVAAEEKNSNSEAPQAEDEETQALEFLNDIKLDSDKTYSILLYGSGAIVALYLTSAIVSSLEAIPLFPKLMEVVGLGYTLWFTTRYLLFKRNREELKTKVSEIKKQVLGSDSE</sequence>
<feature type="transit peptide" description="Chloroplast" evidence="1">
    <location>
        <begin position="1"/>
        <end position="51"/>
    </location>
</feature>
<feature type="chain" id="PRO_0000424361" description="Protein CURVATURE THYLAKOID 1D, chloroplastic">
    <location>
        <begin position="52"/>
        <end position="193"/>
    </location>
</feature>
<feature type="topological domain" description="Stromal" evidence="2">
    <location>
        <begin position="52"/>
        <end position="117"/>
    </location>
</feature>
<feature type="transmembrane region" description="Helical" evidence="1">
    <location>
        <begin position="118"/>
        <end position="138"/>
    </location>
</feature>
<feature type="topological domain" description="Lumenal" evidence="2">
    <location>
        <begin position="139"/>
        <end position="142"/>
    </location>
</feature>
<feature type="transmembrane region" description="Helical" evidence="1">
    <location>
        <begin position="143"/>
        <end position="163"/>
    </location>
</feature>
<feature type="topological domain" description="Stromal" evidence="2">
    <location>
        <begin position="164"/>
        <end position="193"/>
    </location>
</feature>
<proteinExistence type="evidence at protein level"/>
<reference key="1">
    <citation type="journal article" date="1999" name="Nature">
        <title>Sequence and analysis of chromosome 4 of the plant Arabidopsis thaliana.</title>
        <authorList>
            <person name="Mayer K.F.X."/>
            <person name="Schueller C."/>
            <person name="Wambutt R."/>
            <person name="Murphy G."/>
            <person name="Volckaert G."/>
            <person name="Pohl T."/>
            <person name="Duesterhoeft A."/>
            <person name="Stiekema W."/>
            <person name="Entian K.-D."/>
            <person name="Terryn N."/>
            <person name="Harris B."/>
            <person name="Ansorge W."/>
            <person name="Brandt P."/>
            <person name="Grivell L.A."/>
            <person name="Rieger M."/>
            <person name="Weichselgartner M."/>
            <person name="de Simone V."/>
            <person name="Obermaier B."/>
            <person name="Mache R."/>
            <person name="Mueller M."/>
            <person name="Kreis M."/>
            <person name="Delseny M."/>
            <person name="Puigdomenech P."/>
            <person name="Watson M."/>
            <person name="Schmidtheini T."/>
            <person name="Reichert B."/>
            <person name="Portetelle D."/>
            <person name="Perez-Alonso M."/>
            <person name="Boutry M."/>
            <person name="Bancroft I."/>
            <person name="Vos P."/>
            <person name="Hoheisel J."/>
            <person name="Zimmermann W."/>
            <person name="Wedler H."/>
            <person name="Ridley P."/>
            <person name="Langham S.-A."/>
            <person name="McCullagh B."/>
            <person name="Bilham L."/>
            <person name="Robben J."/>
            <person name="van der Schueren J."/>
            <person name="Grymonprez B."/>
            <person name="Chuang Y.-J."/>
            <person name="Vandenbussche F."/>
            <person name="Braeken M."/>
            <person name="Weltjens I."/>
            <person name="Voet M."/>
            <person name="Bastiaens I."/>
            <person name="Aert R."/>
            <person name="Defoor E."/>
            <person name="Weitzenegger T."/>
            <person name="Bothe G."/>
            <person name="Ramsperger U."/>
            <person name="Hilbert H."/>
            <person name="Braun M."/>
            <person name="Holzer E."/>
            <person name="Brandt A."/>
            <person name="Peters S."/>
            <person name="van Staveren M."/>
            <person name="Dirkse W."/>
            <person name="Mooijman P."/>
            <person name="Klein Lankhorst R."/>
            <person name="Rose M."/>
            <person name="Hauf J."/>
            <person name="Koetter P."/>
            <person name="Berneiser S."/>
            <person name="Hempel S."/>
            <person name="Feldpausch M."/>
            <person name="Lamberth S."/>
            <person name="Van den Daele H."/>
            <person name="De Keyser A."/>
            <person name="Buysshaert C."/>
            <person name="Gielen J."/>
            <person name="Villarroel R."/>
            <person name="De Clercq R."/>
            <person name="van Montagu M."/>
            <person name="Rogers J."/>
            <person name="Cronin A."/>
            <person name="Quail M.A."/>
            <person name="Bray-Allen S."/>
            <person name="Clark L."/>
            <person name="Doggett J."/>
            <person name="Hall S."/>
            <person name="Kay M."/>
            <person name="Lennard N."/>
            <person name="McLay K."/>
            <person name="Mayes R."/>
            <person name="Pettett A."/>
            <person name="Rajandream M.A."/>
            <person name="Lyne M."/>
            <person name="Benes V."/>
            <person name="Rechmann S."/>
            <person name="Borkova D."/>
            <person name="Bloecker H."/>
            <person name="Scharfe M."/>
            <person name="Grimm M."/>
            <person name="Loehnert T.-H."/>
            <person name="Dose S."/>
            <person name="de Haan M."/>
            <person name="Maarse A.C."/>
            <person name="Schaefer M."/>
            <person name="Mueller-Auer S."/>
            <person name="Gabel C."/>
            <person name="Fuchs M."/>
            <person name="Fartmann B."/>
            <person name="Granderath K."/>
            <person name="Dauner D."/>
            <person name="Herzl A."/>
            <person name="Neumann S."/>
            <person name="Argiriou A."/>
            <person name="Vitale D."/>
            <person name="Liguori R."/>
            <person name="Piravandi E."/>
            <person name="Massenet O."/>
            <person name="Quigley F."/>
            <person name="Clabauld G."/>
            <person name="Muendlein A."/>
            <person name="Felber R."/>
            <person name="Schnabl S."/>
            <person name="Hiller R."/>
            <person name="Schmidt W."/>
            <person name="Lecharny A."/>
            <person name="Aubourg S."/>
            <person name="Chefdor F."/>
            <person name="Cooke R."/>
            <person name="Berger C."/>
            <person name="Monfort A."/>
            <person name="Casacuberta E."/>
            <person name="Gibbons T."/>
            <person name="Weber N."/>
            <person name="Vandenbol M."/>
            <person name="Bargues M."/>
            <person name="Terol J."/>
            <person name="Torres A."/>
            <person name="Perez-Perez A."/>
            <person name="Purnelle B."/>
            <person name="Bent E."/>
            <person name="Johnson S."/>
            <person name="Tacon D."/>
            <person name="Jesse T."/>
            <person name="Heijnen L."/>
            <person name="Schwarz S."/>
            <person name="Scholler P."/>
            <person name="Heber S."/>
            <person name="Francs P."/>
            <person name="Bielke C."/>
            <person name="Frishman D."/>
            <person name="Haase D."/>
            <person name="Lemcke K."/>
            <person name="Mewes H.-W."/>
            <person name="Stocker S."/>
            <person name="Zaccaria P."/>
            <person name="Bevan M."/>
            <person name="Wilson R.K."/>
            <person name="de la Bastide M."/>
            <person name="Habermann K."/>
            <person name="Parnell L."/>
            <person name="Dedhia N."/>
            <person name="Gnoj L."/>
            <person name="Schutz K."/>
            <person name="Huang E."/>
            <person name="Spiegel L."/>
            <person name="Sekhon M."/>
            <person name="Murray J."/>
            <person name="Sheet P."/>
            <person name="Cordes M."/>
            <person name="Abu-Threideh J."/>
            <person name="Stoneking T."/>
            <person name="Kalicki J."/>
            <person name="Graves T."/>
            <person name="Harmon G."/>
            <person name="Edwards J."/>
            <person name="Latreille P."/>
            <person name="Courtney L."/>
            <person name="Cloud J."/>
            <person name="Abbott A."/>
            <person name="Scott K."/>
            <person name="Johnson D."/>
            <person name="Minx P."/>
            <person name="Bentley D."/>
            <person name="Fulton B."/>
            <person name="Miller N."/>
            <person name="Greco T."/>
            <person name="Kemp K."/>
            <person name="Kramer J."/>
            <person name="Fulton L."/>
            <person name="Mardis E."/>
            <person name="Dante M."/>
            <person name="Pepin K."/>
            <person name="Hillier L.W."/>
            <person name="Nelson J."/>
            <person name="Spieth J."/>
            <person name="Ryan E."/>
            <person name="Andrews S."/>
            <person name="Geisel C."/>
            <person name="Layman D."/>
            <person name="Du H."/>
            <person name="Ali J."/>
            <person name="Berghoff A."/>
            <person name="Jones K."/>
            <person name="Drone K."/>
            <person name="Cotton M."/>
            <person name="Joshu C."/>
            <person name="Antonoiu B."/>
            <person name="Zidanic M."/>
            <person name="Strong C."/>
            <person name="Sun H."/>
            <person name="Lamar B."/>
            <person name="Yordan C."/>
            <person name="Ma P."/>
            <person name="Zhong J."/>
            <person name="Preston R."/>
            <person name="Vil D."/>
            <person name="Shekher M."/>
            <person name="Matero A."/>
            <person name="Shah R."/>
            <person name="Swaby I.K."/>
            <person name="O'Shaughnessy A."/>
            <person name="Rodriguez M."/>
            <person name="Hoffman J."/>
            <person name="Till S."/>
            <person name="Granat S."/>
            <person name="Shohdy N."/>
            <person name="Hasegawa A."/>
            <person name="Hameed A."/>
            <person name="Lodhi M."/>
            <person name="Johnson A."/>
            <person name="Chen E."/>
            <person name="Marra M.A."/>
            <person name="Martienssen R."/>
            <person name="McCombie W.R."/>
        </authorList>
    </citation>
    <scope>NUCLEOTIDE SEQUENCE [LARGE SCALE GENOMIC DNA]</scope>
    <source>
        <strain>cv. Columbia</strain>
    </source>
</reference>
<reference key="2">
    <citation type="journal article" date="2017" name="Plant J.">
        <title>Araport11: a complete reannotation of the Arabidopsis thaliana reference genome.</title>
        <authorList>
            <person name="Cheng C.Y."/>
            <person name="Krishnakumar V."/>
            <person name="Chan A.P."/>
            <person name="Thibaud-Nissen F."/>
            <person name="Schobel S."/>
            <person name="Town C.D."/>
        </authorList>
    </citation>
    <scope>GENOME REANNOTATION</scope>
    <source>
        <strain>cv. Columbia</strain>
    </source>
</reference>
<reference key="3">
    <citation type="submission" date="2006-06" db="EMBL/GenBank/DDBJ databases">
        <title>Arabidopsis ORF clones.</title>
        <authorList>
            <person name="Kim C.J."/>
            <person name="Chen H."/>
            <person name="Quinitio C."/>
            <person name="Shinn P."/>
            <person name="Ecker J.R."/>
        </authorList>
    </citation>
    <scope>NUCLEOTIDE SEQUENCE [LARGE SCALE MRNA]</scope>
</reference>
<reference key="4">
    <citation type="submission" date="2002-03" db="EMBL/GenBank/DDBJ databases">
        <title>Full-length cDNA from Arabidopsis thaliana.</title>
        <authorList>
            <person name="Brover V.V."/>
            <person name="Troukhan M.E."/>
            <person name="Alexandrov N.A."/>
            <person name="Lu Y.-P."/>
            <person name="Flavell R.B."/>
            <person name="Feldmann K.A."/>
        </authorList>
    </citation>
    <scope>NUCLEOTIDE SEQUENCE [LARGE SCALE MRNA]</scope>
</reference>
<reference key="5">
    <citation type="journal article" date="2013" name="Plant Cell">
        <title>Arabidopsis CURVATURE THYLAKOID1 proteins modify thylakoid architecture by inducing membrane curvature.</title>
        <authorList>
            <person name="Armbruster U."/>
            <person name="Labs M."/>
            <person name="Pribil M."/>
            <person name="Viola S."/>
            <person name="Xu W."/>
            <person name="Scharfenberg M."/>
            <person name="Hertle A.P."/>
            <person name="Rojahn U."/>
            <person name="Jensen P.E."/>
            <person name="Rappaport F."/>
            <person name="Joliot P."/>
            <person name="Doermann P."/>
            <person name="Wanner G."/>
            <person name="Leister D."/>
        </authorList>
    </citation>
    <scope>FUNCTION</scope>
    <scope>TOPOLOGY</scope>
    <scope>SUBCELLULAR LOCATION</scope>
    <scope>SUBUNIT</scope>
    <scope>NOMENCLATURE</scope>
    <scope>DISRUPTION PHENOTYPE</scope>
</reference>
<keyword id="KW-0150">Chloroplast</keyword>
<keyword id="KW-0472">Membrane</keyword>
<keyword id="KW-0934">Plastid</keyword>
<keyword id="KW-1185">Reference proteome</keyword>
<keyword id="KW-0793">Thylakoid</keyword>
<keyword id="KW-0809">Transit peptide</keyword>
<keyword id="KW-0812">Transmembrane</keyword>
<keyword id="KW-1133">Transmembrane helix</keyword>
<dbReference type="EMBL" id="AL035538">
    <property type="protein sequence ID" value="CAB37550.1"/>
    <property type="status" value="ALT_SEQ"/>
    <property type="molecule type" value="Genomic_DNA"/>
</dbReference>
<dbReference type="EMBL" id="AL161592">
    <property type="protein sequence ID" value="CAB80475.1"/>
    <property type="status" value="ALT_SEQ"/>
    <property type="molecule type" value="Genomic_DNA"/>
</dbReference>
<dbReference type="EMBL" id="CP002687">
    <property type="protein sequence ID" value="AEE86878.1"/>
    <property type="molecule type" value="Genomic_DNA"/>
</dbReference>
<dbReference type="EMBL" id="BT025771">
    <property type="protein sequence ID" value="ABF83661.1"/>
    <property type="molecule type" value="mRNA"/>
</dbReference>
<dbReference type="EMBL" id="AY086071">
    <property type="protein sequence ID" value="AAM63277.1"/>
    <property type="molecule type" value="mRNA"/>
</dbReference>
<dbReference type="PIR" id="T05637">
    <property type="entry name" value="T05637"/>
</dbReference>
<dbReference type="RefSeq" id="NP_001328504.1">
    <property type="nucleotide sequence ID" value="NM_001342479.1"/>
</dbReference>
<dbReference type="RefSeq" id="NP_568035.1">
    <property type="nucleotide sequence ID" value="NM_119971.4"/>
</dbReference>
<dbReference type="FunCoup" id="Q8LDD3">
    <property type="interactions" value="253"/>
</dbReference>
<dbReference type="STRING" id="3702.Q8LDD3"/>
<dbReference type="TCDB" id="8.A.155.1.4">
    <property type="family name" value="the curt protein (curtp) family"/>
</dbReference>
<dbReference type="PaxDb" id="3702-AT4G38100.1"/>
<dbReference type="ProteomicsDB" id="220460"/>
<dbReference type="EnsemblPlants" id="AT4G38100.1">
    <property type="protein sequence ID" value="AT4G38100.1"/>
    <property type="gene ID" value="AT4G38100"/>
</dbReference>
<dbReference type="GeneID" id="829966"/>
<dbReference type="Gramene" id="AT4G38100.1">
    <property type="protein sequence ID" value="AT4G38100.1"/>
    <property type="gene ID" value="AT4G38100"/>
</dbReference>
<dbReference type="KEGG" id="ath:AT4G38100"/>
<dbReference type="Araport" id="AT4G38100"/>
<dbReference type="TAIR" id="AT4G38100">
    <property type="gene designation" value="CURT1D"/>
</dbReference>
<dbReference type="eggNOG" id="ENOG502S1WK">
    <property type="taxonomic scope" value="Eukaryota"/>
</dbReference>
<dbReference type="HOGENOM" id="CLU_116915_0_0_1"/>
<dbReference type="InParanoid" id="Q8LDD3"/>
<dbReference type="OrthoDB" id="2014299at2759"/>
<dbReference type="PhylomeDB" id="Q8LDD3"/>
<dbReference type="PRO" id="PR:Q8LDD3"/>
<dbReference type="Proteomes" id="UP000006548">
    <property type="component" value="Chromosome 4"/>
</dbReference>
<dbReference type="ExpressionAtlas" id="Q8LDD3">
    <property type="expression patterns" value="baseline and differential"/>
</dbReference>
<dbReference type="GO" id="GO:0009535">
    <property type="term" value="C:chloroplast thylakoid membrane"/>
    <property type="evidence" value="ECO:0007005"/>
    <property type="project" value="TAIR"/>
</dbReference>
<dbReference type="InterPro" id="IPR025564">
    <property type="entry name" value="CAAD_dom"/>
</dbReference>
<dbReference type="InterPro" id="IPR033344">
    <property type="entry name" value="CURT1"/>
</dbReference>
<dbReference type="PANTHER" id="PTHR33222">
    <property type="match status" value="1"/>
</dbReference>
<dbReference type="PANTHER" id="PTHR33222:SF2">
    <property type="entry name" value="PROTEIN CURVATURE THYLAKOID 1D, CHLOROPLASTIC"/>
    <property type="match status" value="1"/>
</dbReference>
<dbReference type="Pfam" id="PF14159">
    <property type="entry name" value="CAAD"/>
    <property type="match status" value="1"/>
</dbReference>
<comment type="function">
    <text evidence="2">Determines thylakoid architecture by inducing membrane curvature.</text>
</comment>
<comment type="subunit">
    <text evidence="2">Homo- and heterodimers and trimers.</text>
</comment>
<comment type="subcellular location">
    <subcellularLocation>
        <location evidence="2">Plastid</location>
        <location evidence="2">Chloroplast thylakoid membrane</location>
        <topology evidence="2">Multi-pass membrane protein</topology>
    </subcellularLocation>
</comment>
<comment type="disruption phenotype">
    <text evidence="2">No effect on growth behavior, leaf coloration, grana stacks or photochemical efficiency of photosystem II. Curt1a, curt1b, curt1c and curt1d quadruple mutant shows disorganized thylakoids with extended stretches of unstacked membranes and broader stacks made up of fewer layers.</text>
</comment>
<comment type="similarity">
    <text evidence="3">Belongs to the CURT family.</text>
</comment>
<comment type="sequence caution" evidence="3">
    <conflict type="erroneous gene model prediction">
        <sequence resource="EMBL-CDS" id="CAB37550"/>
    </conflict>
</comment>
<comment type="sequence caution" evidence="3">
    <conflict type="erroneous gene model prediction">
        <sequence resource="EMBL-CDS" id="CAB80475"/>
    </conflict>
</comment>
<name>CUT1D_ARATH</name>
<organism>
    <name type="scientific">Arabidopsis thaliana</name>
    <name type="common">Mouse-ear cress</name>
    <dbReference type="NCBI Taxonomy" id="3702"/>
    <lineage>
        <taxon>Eukaryota</taxon>
        <taxon>Viridiplantae</taxon>
        <taxon>Streptophyta</taxon>
        <taxon>Embryophyta</taxon>
        <taxon>Tracheophyta</taxon>
        <taxon>Spermatophyta</taxon>
        <taxon>Magnoliopsida</taxon>
        <taxon>eudicotyledons</taxon>
        <taxon>Gunneridae</taxon>
        <taxon>Pentapetalae</taxon>
        <taxon>rosids</taxon>
        <taxon>malvids</taxon>
        <taxon>Brassicales</taxon>
        <taxon>Brassicaceae</taxon>
        <taxon>Camelineae</taxon>
        <taxon>Arabidopsis</taxon>
    </lineage>
</organism>
<protein>
    <recommendedName>
        <fullName>Protein CURVATURE THYLAKOID 1D, chloroplastic</fullName>
    </recommendedName>
</protein>
<accession>Q8LDD3</accession>
<accession>Q9SZL0</accession>